<protein>
    <recommendedName>
        <fullName evidence="1">tRNA pseudouridine synthase A</fullName>
        <ecNumber evidence="1">5.4.99.12</ecNumber>
    </recommendedName>
    <alternativeName>
        <fullName evidence="1">tRNA pseudouridine(38-40) synthase</fullName>
    </alternativeName>
    <alternativeName>
        <fullName evidence="1">tRNA pseudouridylate synthase I</fullName>
    </alternativeName>
    <alternativeName>
        <fullName evidence="1">tRNA-uridine isomerase I</fullName>
    </alternativeName>
</protein>
<evidence type="ECO:0000255" key="1">
    <source>
        <dbReference type="HAMAP-Rule" id="MF_00171"/>
    </source>
</evidence>
<comment type="function">
    <text evidence="1">Formation of pseudouridine at positions 38, 39 and 40 in the anticodon stem and loop of transfer RNAs.</text>
</comment>
<comment type="catalytic activity">
    <reaction evidence="1">
        <text>uridine(38/39/40) in tRNA = pseudouridine(38/39/40) in tRNA</text>
        <dbReference type="Rhea" id="RHEA:22376"/>
        <dbReference type="Rhea" id="RHEA-COMP:10085"/>
        <dbReference type="Rhea" id="RHEA-COMP:10087"/>
        <dbReference type="ChEBI" id="CHEBI:65314"/>
        <dbReference type="ChEBI" id="CHEBI:65315"/>
        <dbReference type="EC" id="5.4.99.12"/>
    </reaction>
</comment>
<comment type="subunit">
    <text evidence="1">Homodimer.</text>
</comment>
<comment type="similarity">
    <text evidence="1">Belongs to the tRNA pseudouridine synthase TruA family.</text>
</comment>
<accession>Q14HI8</accession>
<gene>
    <name evidence="1" type="primary">truA</name>
    <name type="ordered locus">FTF1021c</name>
</gene>
<feature type="chain" id="PRO_1000017082" description="tRNA pseudouridine synthase A">
    <location>
        <begin position="1"/>
        <end position="258"/>
    </location>
</feature>
<feature type="active site" description="Nucleophile" evidence="1">
    <location>
        <position position="52"/>
    </location>
</feature>
<feature type="binding site" evidence="1">
    <location>
        <position position="110"/>
    </location>
    <ligand>
        <name>substrate</name>
    </ligand>
</feature>
<organism>
    <name type="scientific">Francisella tularensis subsp. tularensis (strain FSC 198)</name>
    <dbReference type="NCBI Taxonomy" id="393115"/>
    <lineage>
        <taxon>Bacteria</taxon>
        <taxon>Pseudomonadati</taxon>
        <taxon>Pseudomonadota</taxon>
        <taxon>Gammaproteobacteria</taxon>
        <taxon>Thiotrichales</taxon>
        <taxon>Francisellaceae</taxon>
        <taxon>Francisella</taxon>
    </lineage>
</organism>
<sequence length="258" mass="29530">MKNYLLQIEYFGKNYCGWQRQSHSPSVQEELEKALSKIANQNIEVTCAGRTDTGVHATSQIVNFYSNADRPLSAWQRGVNALLPQDIKILAVQQVDNNFNSRFTAINRTYNYIIYNSATSSPIFAEHCLWENRELDIDKMNQACEYLLGEQDFSSFRSSQCQSNTPFRNIQKAEFIKQGSFIVFEVVGNAFLHHMIRNLVGSLLKVGLGFESPEWIKVVLEAKDRTQAAETAKAHGLYFVGVEYPEFSFKRQIIKLFC</sequence>
<dbReference type="EC" id="5.4.99.12" evidence="1"/>
<dbReference type="EMBL" id="AM286280">
    <property type="protein sequence ID" value="CAL09037.1"/>
    <property type="molecule type" value="Genomic_DNA"/>
</dbReference>
<dbReference type="RefSeq" id="WP_003021118.1">
    <property type="nucleotide sequence ID" value="NC_008245.1"/>
</dbReference>
<dbReference type="SMR" id="Q14HI8"/>
<dbReference type="KEGG" id="ftf:FTF1021c"/>
<dbReference type="HOGENOM" id="CLU_014673_0_2_6"/>
<dbReference type="GO" id="GO:0003723">
    <property type="term" value="F:RNA binding"/>
    <property type="evidence" value="ECO:0007669"/>
    <property type="project" value="InterPro"/>
</dbReference>
<dbReference type="GO" id="GO:0160147">
    <property type="term" value="F:tRNA pseudouridine(38-40) synthase activity"/>
    <property type="evidence" value="ECO:0007669"/>
    <property type="project" value="UniProtKB-EC"/>
</dbReference>
<dbReference type="GO" id="GO:0031119">
    <property type="term" value="P:tRNA pseudouridine synthesis"/>
    <property type="evidence" value="ECO:0007669"/>
    <property type="project" value="UniProtKB-UniRule"/>
</dbReference>
<dbReference type="CDD" id="cd02570">
    <property type="entry name" value="PseudoU_synth_EcTruA"/>
    <property type="match status" value="1"/>
</dbReference>
<dbReference type="FunFam" id="3.30.70.580:FF:000001">
    <property type="entry name" value="tRNA pseudouridine synthase A"/>
    <property type="match status" value="1"/>
</dbReference>
<dbReference type="Gene3D" id="3.30.70.660">
    <property type="entry name" value="Pseudouridine synthase I, catalytic domain, C-terminal subdomain"/>
    <property type="match status" value="1"/>
</dbReference>
<dbReference type="Gene3D" id="3.30.70.580">
    <property type="entry name" value="Pseudouridine synthase I, catalytic domain, N-terminal subdomain"/>
    <property type="match status" value="1"/>
</dbReference>
<dbReference type="HAMAP" id="MF_00171">
    <property type="entry name" value="TruA"/>
    <property type="match status" value="1"/>
</dbReference>
<dbReference type="InterPro" id="IPR020103">
    <property type="entry name" value="PsdUridine_synth_cat_dom_sf"/>
</dbReference>
<dbReference type="InterPro" id="IPR001406">
    <property type="entry name" value="PsdUridine_synth_TruA"/>
</dbReference>
<dbReference type="InterPro" id="IPR020097">
    <property type="entry name" value="PsdUridine_synth_TruA_a/b_dom"/>
</dbReference>
<dbReference type="InterPro" id="IPR020095">
    <property type="entry name" value="PsdUridine_synth_TruA_C"/>
</dbReference>
<dbReference type="InterPro" id="IPR020094">
    <property type="entry name" value="TruA/RsuA/RluB/E/F_N"/>
</dbReference>
<dbReference type="NCBIfam" id="TIGR00071">
    <property type="entry name" value="hisT_truA"/>
    <property type="match status" value="1"/>
</dbReference>
<dbReference type="PANTHER" id="PTHR11142">
    <property type="entry name" value="PSEUDOURIDYLATE SYNTHASE"/>
    <property type="match status" value="1"/>
</dbReference>
<dbReference type="PANTHER" id="PTHR11142:SF0">
    <property type="entry name" value="TRNA PSEUDOURIDINE SYNTHASE-LIKE 1"/>
    <property type="match status" value="1"/>
</dbReference>
<dbReference type="Pfam" id="PF01416">
    <property type="entry name" value="PseudoU_synth_1"/>
    <property type="match status" value="2"/>
</dbReference>
<dbReference type="PIRSF" id="PIRSF001430">
    <property type="entry name" value="tRNA_psdUrid_synth"/>
    <property type="match status" value="1"/>
</dbReference>
<dbReference type="SUPFAM" id="SSF55120">
    <property type="entry name" value="Pseudouridine synthase"/>
    <property type="match status" value="1"/>
</dbReference>
<reference key="1">
    <citation type="journal article" date="2007" name="PLoS ONE">
        <title>Genome sequencing shows that European isolates of Francisella tularensis subspecies tularensis are almost identical to US laboratory strain Schu S4.</title>
        <authorList>
            <person name="Chaudhuri R.R."/>
            <person name="Ren C.-P."/>
            <person name="Desmond L."/>
            <person name="Vincent G.A."/>
            <person name="Silman N.J."/>
            <person name="Brehm J.K."/>
            <person name="Elmore M.J."/>
            <person name="Hudson M.J."/>
            <person name="Forsman M."/>
            <person name="Isherwood K.E."/>
            <person name="Gurycova D."/>
            <person name="Minton N.P."/>
            <person name="Titball R.W."/>
            <person name="Pallen M.J."/>
            <person name="Vipond R."/>
        </authorList>
    </citation>
    <scope>NUCLEOTIDE SEQUENCE [LARGE SCALE GENOMIC DNA]</scope>
    <source>
        <strain>FSC 198</strain>
    </source>
</reference>
<name>TRUA_FRAT1</name>
<keyword id="KW-0413">Isomerase</keyword>
<keyword id="KW-0819">tRNA processing</keyword>
<proteinExistence type="inferred from homology"/>